<feature type="chain" id="PRO_0000267405" description="dTTP/UTP pyrophosphatase">
    <location>
        <begin position="1"/>
        <end position="207"/>
    </location>
</feature>
<feature type="active site" description="Proton acceptor" evidence="1">
    <location>
        <position position="79"/>
    </location>
</feature>
<feature type="site" description="Important for substrate specificity" evidence="1">
    <location>
        <position position="15"/>
    </location>
</feature>
<feature type="site" description="Important for substrate specificity" evidence="1">
    <location>
        <position position="80"/>
    </location>
</feature>
<feature type="site" description="Important for substrate specificity" evidence="1">
    <location>
        <position position="163"/>
    </location>
</feature>
<proteinExistence type="inferred from homology"/>
<sequence length="207" mass="22334">MLGRPKLVLASGSPRRLALLNQAGIEPDALRPADVDETPTKGELPRSCANRLARAKAEAALQSIQLDDDLRGAYLLAADTVVAVGRRILPKAELVDEASQCLRLLSGRNHRVYTAVCLVTPKGSFRQRLIETKVRFKRLSEEDIDGYVGSGEWRGKAGGYAVQGIAGSFVVKIVGSYTNIVGLPLYETVSLLGGEGFPIRFGWLNAS</sequence>
<dbReference type="EC" id="3.6.1.9" evidence="1"/>
<dbReference type="EMBL" id="CP000283">
    <property type="protein sequence ID" value="ABE41493.1"/>
    <property type="molecule type" value="Genomic_DNA"/>
</dbReference>
<dbReference type="SMR" id="Q130J6"/>
<dbReference type="STRING" id="316057.RPD_4276"/>
<dbReference type="KEGG" id="rpd:RPD_4276"/>
<dbReference type="eggNOG" id="COG0424">
    <property type="taxonomic scope" value="Bacteria"/>
</dbReference>
<dbReference type="HOGENOM" id="CLU_040416_2_0_5"/>
<dbReference type="BioCyc" id="RPAL316057:RPD_RS21505-MONOMER"/>
<dbReference type="Proteomes" id="UP000001818">
    <property type="component" value="Chromosome"/>
</dbReference>
<dbReference type="GO" id="GO:0005737">
    <property type="term" value="C:cytoplasm"/>
    <property type="evidence" value="ECO:0007669"/>
    <property type="project" value="UniProtKB-SubCell"/>
</dbReference>
<dbReference type="GO" id="GO:0036218">
    <property type="term" value="F:dTTP diphosphatase activity"/>
    <property type="evidence" value="ECO:0007669"/>
    <property type="project" value="RHEA"/>
</dbReference>
<dbReference type="GO" id="GO:0036221">
    <property type="term" value="F:UTP diphosphatase activity"/>
    <property type="evidence" value="ECO:0007669"/>
    <property type="project" value="RHEA"/>
</dbReference>
<dbReference type="GO" id="GO:0009117">
    <property type="term" value="P:nucleotide metabolic process"/>
    <property type="evidence" value="ECO:0007669"/>
    <property type="project" value="UniProtKB-KW"/>
</dbReference>
<dbReference type="CDD" id="cd00555">
    <property type="entry name" value="Maf"/>
    <property type="match status" value="1"/>
</dbReference>
<dbReference type="FunFam" id="3.90.950.10:FF:000005">
    <property type="entry name" value="7-methyl-GTP pyrophosphatase"/>
    <property type="match status" value="1"/>
</dbReference>
<dbReference type="Gene3D" id="3.90.950.10">
    <property type="match status" value="1"/>
</dbReference>
<dbReference type="HAMAP" id="MF_00528">
    <property type="entry name" value="Maf"/>
    <property type="match status" value="1"/>
</dbReference>
<dbReference type="InterPro" id="IPR029001">
    <property type="entry name" value="ITPase-like_fam"/>
</dbReference>
<dbReference type="InterPro" id="IPR003697">
    <property type="entry name" value="Maf-like"/>
</dbReference>
<dbReference type="NCBIfam" id="TIGR00172">
    <property type="entry name" value="maf"/>
    <property type="match status" value="1"/>
</dbReference>
<dbReference type="NCBIfam" id="NF002401">
    <property type="entry name" value="PRK01441.1"/>
    <property type="match status" value="1"/>
</dbReference>
<dbReference type="PANTHER" id="PTHR43213">
    <property type="entry name" value="BIFUNCTIONAL DTTP/UTP PYROPHOSPHATASE/METHYLTRANSFERASE PROTEIN-RELATED"/>
    <property type="match status" value="1"/>
</dbReference>
<dbReference type="PANTHER" id="PTHR43213:SF5">
    <property type="entry name" value="BIFUNCTIONAL DTTP_UTP PYROPHOSPHATASE_METHYLTRANSFERASE PROTEIN-RELATED"/>
    <property type="match status" value="1"/>
</dbReference>
<dbReference type="Pfam" id="PF02545">
    <property type="entry name" value="Maf"/>
    <property type="match status" value="1"/>
</dbReference>
<dbReference type="PIRSF" id="PIRSF006305">
    <property type="entry name" value="Maf"/>
    <property type="match status" value="1"/>
</dbReference>
<dbReference type="SUPFAM" id="SSF52972">
    <property type="entry name" value="ITPase-like"/>
    <property type="match status" value="1"/>
</dbReference>
<reference key="1">
    <citation type="submission" date="2006-03" db="EMBL/GenBank/DDBJ databases">
        <title>Complete sequence of Rhodopseudomonas palustris BisB5.</title>
        <authorList>
            <consortium name="US DOE Joint Genome Institute"/>
            <person name="Copeland A."/>
            <person name="Lucas S."/>
            <person name="Lapidus A."/>
            <person name="Barry K."/>
            <person name="Detter J.C."/>
            <person name="Glavina del Rio T."/>
            <person name="Hammon N."/>
            <person name="Israni S."/>
            <person name="Dalin E."/>
            <person name="Tice H."/>
            <person name="Pitluck S."/>
            <person name="Chain P."/>
            <person name="Malfatti S."/>
            <person name="Shin M."/>
            <person name="Vergez L."/>
            <person name="Schmutz J."/>
            <person name="Larimer F."/>
            <person name="Land M."/>
            <person name="Hauser L."/>
            <person name="Pelletier D.A."/>
            <person name="Kyrpides N."/>
            <person name="Lykidis A."/>
            <person name="Oda Y."/>
            <person name="Harwood C.S."/>
            <person name="Richardson P."/>
        </authorList>
    </citation>
    <scope>NUCLEOTIDE SEQUENCE [LARGE SCALE GENOMIC DNA]</scope>
    <source>
        <strain>BisB5</strain>
    </source>
</reference>
<comment type="function">
    <text evidence="1">Nucleoside triphosphate pyrophosphatase that hydrolyzes dTTP and UTP. May have a dual role in cell division arrest and in preventing the incorporation of modified nucleotides into cellular nucleic acids.</text>
</comment>
<comment type="catalytic activity">
    <reaction evidence="1">
        <text>dTTP + H2O = dTMP + diphosphate + H(+)</text>
        <dbReference type="Rhea" id="RHEA:28534"/>
        <dbReference type="ChEBI" id="CHEBI:15377"/>
        <dbReference type="ChEBI" id="CHEBI:15378"/>
        <dbReference type="ChEBI" id="CHEBI:33019"/>
        <dbReference type="ChEBI" id="CHEBI:37568"/>
        <dbReference type="ChEBI" id="CHEBI:63528"/>
        <dbReference type="EC" id="3.6.1.9"/>
    </reaction>
</comment>
<comment type="catalytic activity">
    <reaction evidence="1">
        <text>UTP + H2O = UMP + diphosphate + H(+)</text>
        <dbReference type="Rhea" id="RHEA:29395"/>
        <dbReference type="ChEBI" id="CHEBI:15377"/>
        <dbReference type="ChEBI" id="CHEBI:15378"/>
        <dbReference type="ChEBI" id="CHEBI:33019"/>
        <dbReference type="ChEBI" id="CHEBI:46398"/>
        <dbReference type="ChEBI" id="CHEBI:57865"/>
        <dbReference type="EC" id="3.6.1.9"/>
    </reaction>
</comment>
<comment type="cofactor">
    <cofactor evidence="1">
        <name>a divalent metal cation</name>
        <dbReference type="ChEBI" id="CHEBI:60240"/>
    </cofactor>
</comment>
<comment type="subcellular location">
    <subcellularLocation>
        <location evidence="1">Cytoplasm</location>
    </subcellularLocation>
</comment>
<comment type="similarity">
    <text evidence="1">Belongs to the Maf family. YhdE subfamily.</text>
</comment>
<accession>Q130J6</accession>
<organism>
    <name type="scientific">Rhodopseudomonas palustris (strain BisB5)</name>
    <dbReference type="NCBI Taxonomy" id="316057"/>
    <lineage>
        <taxon>Bacteria</taxon>
        <taxon>Pseudomonadati</taxon>
        <taxon>Pseudomonadota</taxon>
        <taxon>Alphaproteobacteria</taxon>
        <taxon>Hyphomicrobiales</taxon>
        <taxon>Nitrobacteraceae</taxon>
        <taxon>Rhodopseudomonas</taxon>
    </lineage>
</organism>
<protein>
    <recommendedName>
        <fullName evidence="1">dTTP/UTP pyrophosphatase</fullName>
        <shortName evidence="1">dTTPase/UTPase</shortName>
        <ecNumber evidence="1">3.6.1.9</ecNumber>
    </recommendedName>
    <alternativeName>
        <fullName evidence="1">Nucleoside triphosphate pyrophosphatase</fullName>
    </alternativeName>
    <alternativeName>
        <fullName evidence="1">Nucleotide pyrophosphatase</fullName>
        <shortName evidence="1">Nucleotide PPase</shortName>
    </alternativeName>
</protein>
<gene>
    <name type="ordered locus">RPD_4276</name>
</gene>
<keyword id="KW-0963">Cytoplasm</keyword>
<keyword id="KW-0378">Hydrolase</keyword>
<keyword id="KW-0546">Nucleotide metabolism</keyword>
<evidence type="ECO:0000255" key="1">
    <source>
        <dbReference type="HAMAP-Rule" id="MF_00528"/>
    </source>
</evidence>
<name>NTPPA_RHOPS</name>